<keyword id="KW-0002">3D-structure</keyword>
<keyword id="KW-0175">Coiled coil</keyword>
<keyword id="KW-0963">Cytoplasm</keyword>
<keyword id="KW-0597">Phosphoprotein</keyword>
<keyword id="KW-0648">Protein biosynthesis</keyword>
<keyword id="KW-1185">Reference proteome</keyword>
<organism>
    <name type="scientific">Saccharomyces cerevisiae (strain ATCC 204508 / S288c)</name>
    <name type="common">Baker's yeast</name>
    <dbReference type="NCBI Taxonomy" id="559292"/>
    <lineage>
        <taxon>Eukaryota</taxon>
        <taxon>Fungi</taxon>
        <taxon>Dikarya</taxon>
        <taxon>Ascomycota</taxon>
        <taxon>Saccharomycotina</taxon>
        <taxon>Saccharomycetes</taxon>
        <taxon>Saccharomycetales</taxon>
        <taxon>Saccharomycetaceae</taxon>
        <taxon>Saccharomyces</taxon>
    </lineage>
</organism>
<name>RQC2_YEAST</name>
<evidence type="ECO:0000255" key="1"/>
<evidence type="ECO:0000256" key="2">
    <source>
        <dbReference type="SAM" id="MobiDB-lite"/>
    </source>
</evidence>
<evidence type="ECO:0000269" key="3">
    <source>
    </source>
</evidence>
<evidence type="ECO:0000269" key="4">
    <source>
    </source>
</evidence>
<evidence type="ECO:0000269" key="5">
    <source>
    </source>
</evidence>
<evidence type="ECO:0000269" key="6">
    <source>
    </source>
</evidence>
<evidence type="ECO:0000269" key="7">
    <source>
    </source>
</evidence>
<evidence type="ECO:0000269" key="8">
    <source>
    </source>
</evidence>
<evidence type="ECO:0000269" key="9">
    <source>
    </source>
</evidence>
<evidence type="ECO:0000269" key="10">
    <source>
    </source>
</evidence>
<evidence type="ECO:0000269" key="11">
    <source>
    </source>
</evidence>
<evidence type="ECO:0000269" key="12">
    <source>
    </source>
</evidence>
<evidence type="ECO:0000269" key="13">
    <source>
    </source>
</evidence>
<evidence type="ECO:0000269" key="14">
    <source>
    </source>
</evidence>
<evidence type="ECO:0000269" key="15">
    <source>
    </source>
</evidence>
<evidence type="ECO:0000303" key="16">
    <source>
    </source>
</evidence>
<evidence type="ECO:0000303" key="17">
    <source>
    </source>
</evidence>
<evidence type="ECO:0000305" key="18"/>
<evidence type="ECO:0000312" key="19">
    <source>
        <dbReference type="SGD" id="S000005930"/>
    </source>
</evidence>
<evidence type="ECO:0007744" key="20">
    <source>
    </source>
</evidence>
<reference key="1">
    <citation type="journal article" date="1997" name="Nature">
        <title>The nucleotide sequence of Saccharomyces cerevisiae chromosome XVI.</title>
        <authorList>
            <person name="Bussey H."/>
            <person name="Storms R.K."/>
            <person name="Ahmed A."/>
            <person name="Albermann K."/>
            <person name="Allen E."/>
            <person name="Ansorge W."/>
            <person name="Araujo R."/>
            <person name="Aparicio A."/>
            <person name="Barrell B.G."/>
            <person name="Badcock K."/>
            <person name="Benes V."/>
            <person name="Botstein D."/>
            <person name="Bowman S."/>
            <person name="Brueckner M."/>
            <person name="Carpenter J."/>
            <person name="Cherry J.M."/>
            <person name="Chung E."/>
            <person name="Churcher C.M."/>
            <person name="Coster F."/>
            <person name="Davis K."/>
            <person name="Davis R.W."/>
            <person name="Dietrich F.S."/>
            <person name="Delius H."/>
            <person name="DiPaolo T."/>
            <person name="Dubois E."/>
            <person name="Duesterhoeft A."/>
            <person name="Duncan M."/>
            <person name="Floeth M."/>
            <person name="Fortin N."/>
            <person name="Friesen J.D."/>
            <person name="Fritz C."/>
            <person name="Goffeau A."/>
            <person name="Hall J."/>
            <person name="Hebling U."/>
            <person name="Heumann K."/>
            <person name="Hilbert H."/>
            <person name="Hillier L.W."/>
            <person name="Hunicke-Smith S."/>
            <person name="Hyman R.W."/>
            <person name="Johnston M."/>
            <person name="Kalman S."/>
            <person name="Kleine K."/>
            <person name="Komp C."/>
            <person name="Kurdi O."/>
            <person name="Lashkari D."/>
            <person name="Lew H."/>
            <person name="Lin A."/>
            <person name="Lin D."/>
            <person name="Louis E.J."/>
            <person name="Marathe R."/>
            <person name="Messenguy F."/>
            <person name="Mewes H.-W."/>
            <person name="Mirtipati S."/>
            <person name="Moestl D."/>
            <person name="Mueller-Auer S."/>
            <person name="Namath A."/>
            <person name="Nentwich U."/>
            <person name="Oefner P."/>
            <person name="Pearson D."/>
            <person name="Petel F.X."/>
            <person name="Pohl T.M."/>
            <person name="Purnelle B."/>
            <person name="Rajandream M.A."/>
            <person name="Rechmann S."/>
            <person name="Rieger M."/>
            <person name="Riles L."/>
            <person name="Roberts D."/>
            <person name="Schaefer M."/>
            <person name="Scharfe M."/>
            <person name="Scherens B."/>
            <person name="Schramm S."/>
            <person name="Schroeder M."/>
            <person name="Sdicu A.-M."/>
            <person name="Tettelin H."/>
            <person name="Urrestarazu L.A."/>
            <person name="Ushinsky S."/>
            <person name="Vierendeels F."/>
            <person name="Vissers S."/>
            <person name="Voss H."/>
            <person name="Walsh S.V."/>
            <person name="Wambutt R."/>
            <person name="Wang Y."/>
            <person name="Wedler E."/>
            <person name="Wedler H."/>
            <person name="Winnett E."/>
            <person name="Zhong W.-W."/>
            <person name="Zollner A."/>
            <person name="Vo D.H."/>
            <person name="Hani J."/>
        </authorList>
    </citation>
    <scope>NUCLEOTIDE SEQUENCE [LARGE SCALE GENOMIC DNA]</scope>
    <source>
        <strain>ATCC 204508 / S288c</strain>
    </source>
</reference>
<reference key="2">
    <citation type="journal article" date="2014" name="G3 (Bethesda)">
        <title>The reference genome sequence of Saccharomyces cerevisiae: Then and now.</title>
        <authorList>
            <person name="Engel S.R."/>
            <person name="Dietrich F.S."/>
            <person name="Fisk D.G."/>
            <person name="Binkley G."/>
            <person name="Balakrishnan R."/>
            <person name="Costanzo M.C."/>
            <person name="Dwight S.S."/>
            <person name="Hitz B.C."/>
            <person name="Karra K."/>
            <person name="Nash R.S."/>
            <person name="Weng S."/>
            <person name="Wong E.D."/>
            <person name="Lloyd P."/>
            <person name="Skrzypek M.S."/>
            <person name="Miyasato S.R."/>
            <person name="Simison M."/>
            <person name="Cherry J.M."/>
        </authorList>
    </citation>
    <scope>GENOME REANNOTATION</scope>
    <source>
        <strain>ATCC 204508 / S288c</strain>
    </source>
</reference>
<reference key="3">
    <citation type="journal article" date="2003" name="Nature">
        <title>Global analysis of protein localization in budding yeast.</title>
        <authorList>
            <person name="Huh W.-K."/>
            <person name="Falvo J.V."/>
            <person name="Gerke L.C."/>
            <person name="Carroll A.S."/>
            <person name="Howson R.W."/>
            <person name="Weissman J.S."/>
            <person name="O'Shea E.K."/>
        </authorList>
    </citation>
    <scope>SUBCELLULAR LOCATION [LARGE SCALE ANALYSIS]</scope>
</reference>
<reference key="4">
    <citation type="journal article" date="2003" name="Nature">
        <title>Global analysis of protein expression in yeast.</title>
        <authorList>
            <person name="Ghaemmaghami S."/>
            <person name="Huh W.-K."/>
            <person name="Bower K."/>
            <person name="Howson R.W."/>
            <person name="Belle A."/>
            <person name="Dephoure N."/>
            <person name="O'Shea E.K."/>
            <person name="Weissman J.S."/>
        </authorList>
    </citation>
    <scope>LEVEL OF PROTEIN EXPRESSION [LARGE SCALE ANALYSIS]</scope>
</reference>
<reference key="5">
    <citation type="journal article" date="2006" name="Genes Dev.">
        <title>Systematic identification and functional screens of uncharacterized proteins associated with eukaryotic ribosomal complexes.</title>
        <authorList>
            <person name="Fleischer T.C."/>
            <person name="Weaver C.M."/>
            <person name="McAfee K.J."/>
            <person name="Jennings J.L."/>
            <person name="Link A.J."/>
        </authorList>
    </citation>
    <scope>IDENTIFICATION BY MASS SPECTROMETRY</scope>
    <scope>ASSOCIATION WITH RIBOSOMES</scope>
</reference>
<reference key="6">
    <citation type="journal article" date="2008" name="Mol. Cell. Proteomics">
        <title>A multidimensional chromatography technology for in-depth phosphoproteome analysis.</title>
        <authorList>
            <person name="Albuquerque C.P."/>
            <person name="Smolka M.B."/>
            <person name="Payne S.H."/>
            <person name="Bafna V."/>
            <person name="Eng J."/>
            <person name="Zhou H."/>
        </authorList>
    </citation>
    <scope>IDENTIFICATION BY MASS SPECTROMETRY [LARGE SCALE ANALYSIS]</scope>
</reference>
<reference key="7">
    <citation type="journal article" date="2009" name="Science">
        <title>Global analysis of Cdk1 substrate phosphorylation sites provides insights into evolution.</title>
        <authorList>
            <person name="Holt L.J."/>
            <person name="Tuch B.B."/>
            <person name="Villen J."/>
            <person name="Johnson A.D."/>
            <person name="Gygi S.P."/>
            <person name="Morgan D.O."/>
        </authorList>
    </citation>
    <scope>PHOSPHORYLATION [LARGE SCALE ANALYSIS] AT SER-797</scope>
    <scope>IDENTIFICATION BY MASS SPECTROMETRY [LARGE SCALE ANALYSIS]</scope>
</reference>
<reference key="8">
    <citation type="journal article" date="2010" name="BMC Chem. Biol.">
        <title>Chemical-genetic profile analysis of five inhibitory compounds in yeast.</title>
        <authorList>
            <person name="Alamgir M."/>
            <person name="Erukova V."/>
            <person name="Jessulat M."/>
            <person name="Azizi A."/>
            <person name="Golshani A."/>
        </authorList>
    </citation>
    <scope>FUNCTION</scope>
</reference>
<reference key="9">
    <citation type="journal article" date="2012" name="Cell">
        <title>A ribosome-bound quality control complex triggers degradation of nascent peptides and signals translation stress.</title>
        <authorList>
            <person name="Brandman O."/>
            <person name="Stewart-Ornstein J."/>
            <person name="Wong D."/>
            <person name="Larson A."/>
            <person name="Williams C.C."/>
            <person name="Li G.W."/>
            <person name="Zhou S."/>
            <person name="King D."/>
            <person name="Shen P.S."/>
            <person name="Weibezahn J."/>
            <person name="Dunn J.G."/>
            <person name="Rouskin S."/>
            <person name="Inada T."/>
            <person name="Frost A."/>
            <person name="Weissman J.S."/>
        </authorList>
    </citation>
    <scope>FUNCTION</scope>
    <scope>SUBUNIT</scope>
</reference>
<reference key="10">
    <citation type="journal article" date="2013" name="Proc. Natl. Acad. Sci. U.S.A.">
        <title>Cdc48-associated complex bound to 60S particles is required for the clearance of aberrant translation products.</title>
        <authorList>
            <person name="Defenouillere Q."/>
            <person name="Yao Y."/>
            <person name="Mouaikel J."/>
            <person name="Namane A."/>
            <person name="Galopier A."/>
            <person name="Decourty L."/>
            <person name="Doyen A."/>
            <person name="Malabat C."/>
            <person name="Saveanu C."/>
            <person name="Jacquier A."/>
            <person name="Fromont-Racine M."/>
        </authorList>
    </citation>
    <scope>SUBUNIT</scope>
</reference>
<reference key="11">
    <citation type="journal article" date="2014" name="Proc. Natl. Acad. Sci. U.S.A.">
        <title>Structural basis for translational surveillance by the large ribosomal subunit-associated protein quality control complex.</title>
        <authorList>
            <person name="Lyumkis D."/>
            <person name="Oliveira dos Passos D."/>
            <person name="Tahara E.B."/>
            <person name="Webb K."/>
            <person name="Bennett E.J."/>
            <person name="Vinterbo S."/>
            <person name="Potter C.S."/>
            <person name="Carragher B."/>
            <person name="Joazeiro C.A."/>
        </authorList>
    </citation>
    <scope>FUNCTION</scope>
    <scope>SUBUNIT</scope>
</reference>
<reference key="12">
    <citation type="journal article" date="2015" name="Science">
        <title>Protein synthesis. Rqc2p and 60S ribosomal subunits mediate mRNA-independent elongation of nascent chains.</title>
        <authorList>
            <person name="Shen P.S."/>
            <person name="Park J."/>
            <person name="Qin Y."/>
            <person name="Li X."/>
            <person name="Parsawar K."/>
            <person name="Larson M.H."/>
            <person name="Cox J."/>
            <person name="Cheng Y."/>
            <person name="Lambowitz A.M."/>
            <person name="Weissman J.S."/>
            <person name="Brandman O."/>
            <person name="Frost A."/>
        </authorList>
    </citation>
    <scope>FUNCTION</scope>
    <scope>SUBUNIT</scope>
    <scope>MUTAGENESIS OF ASP-9; ASP-98 AND ARG-99</scope>
</reference>
<reference key="13">
    <citation type="journal article" date="2016" name="J. Biol. Chem.">
        <title>Rqc1 and Ltn1 prevent C-terminal alanine-threonine tail (CAT-tail)-induced protein aggregation by efficient recruitment of Cdc48 on stalled 60S subunits.</title>
        <authorList>
            <person name="Defenouillere Q."/>
            <person name="Zhang E."/>
            <person name="Namane A."/>
            <person name="Mouaikel J."/>
            <person name="Jacquier A."/>
            <person name="Fromont-Racine M."/>
        </authorList>
    </citation>
    <scope>FUNCTION</scope>
</reference>
<reference key="14">
    <citation type="journal article" date="2016" name="Nature">
        <title>Failure of RQC machinery causes protein aggregation and proteotoxic stress.</title>
        <authorList>
            <person name="Choe Y.J."/>
            <person name="Park S.H."/>
            <person name="Hassemer T."/>
            <person name="Koerner R."/>
            <person name="Vincenz-Donnelly L."/>
            <person name="Hayer-Hartl M."/>
            <person name="Hartl F.U."/>
        </authorList>
    </citation>
    <scope>FUNCTION</scope>
</reference>
<reference key="15">
    <citation type="journal article" date="2017" name="Science">
        <title>CAT-tailing as a fail-safe mechanism for efficient degradation of stalled nascent polypeptides.</title>
        <authorList>
            <person name="Kostova K.K."/>
            <person name="Hickey K.L."/>
            <person name="Osuna B.A."/>
            <person name="Hussmann J.A."/>
            <person name="Frost A."/>
            <person name="Weinberg D.E."/>
            <person name="Weissman J.S."/>
        </authorList>
    </citation>
    <scope>FUNCTION</scope>
</reference>
<reference key="16">
    <citation type="journal article" date="2019" name="Nat. Struct. Mol. Biol.">
        <title>CAT tails drive degradation of stalled polypeptides on and off the ribosome.</title>
        <authorList>
            <person name="Sitron C.S."/>
            <person name="Brandman O."/>
        </authorList>
    </citation>
    <scope>FUNCTION</scope>
</reference>
<reference key="17">
    <citation type="journal article" date="2020" name="Nat. Commun.">
        <title>NEMF mutations that impair ribosome-associated quality control are associated with neuromuscular disease.</title>
        <authorList>
            <person name="Martin P.B."/>
            <person name="Kigoshi-Tansho Y."/>
            <person name="Sher R.B."/>
            <person name="Ravenscroft G."/>
            <person name="Stauffer J.E."/>
            <person name="Kumar R."/>
            <person name="Yonashiro R."/>
            <person name="Mueller T."/>
            <person name="Griffith C."/>
            <person name="Allen W."/>
            <person name="Pehlivan D."/>
            <person name="Harel T."/>
            <person name="Zenker M."/>
            <person name="Howting D."/>
            <person name="Schanze D."/>
            <person name="Faqeih E.A."/>
            <person name="Almontashiri N.A.M."/>
            <person name="Maroofian R."/>
            <person name="Houlden H."/>
            <person name="Mazaheri N."/>
            <person name="Galehdari H."/>
            <person name="Douglas G."/>
            <person name="Posey J.E."/>
            <person name="Ryan M."/>
            <person name="Lupski J.R."/>
            <person name="Laing N.G."/>
            <person name="Joazeiro C.A.P."/>
            <person name="Cox G.A."/>
        </authorList>
    </citation>
    <scope>FUNCTION</scope>
    <scope>MUTAGENESIS OF ARG-88; ASP-98 AND LYS-534</scope>
</reference>
<reference key="18">
    <citation type="journal article" date="2023" name="Mol. Cell">
        <title>Molecular basis of eIF5A-dependent CAT tailing in eukaryotic ribosome-associated quality control.</title>
        <authorList>
            <person name="Tesina P."/>
            <person name="Ebine S."/>
            <person name="Buschauer R."/>
            <person name="Thoms M."/>
            <person name="Matsuo Y."/>
            <person name="Inada T."/>
            <person name="Beckmann R."/>
        </authorList>
    </citation>
    <scope>STRUCTURE BY ELECTRON MICROSCOPY (2.7 ANGSTROMS) IN COMPLEX WITH RKR1; HYP2; TIF6 AND 60S RIBOSOMAL SUBUNIT</scope>
    <scope>FUNCTION</scope>
    <scope>MUTAGENESIS OF ASP-9; ASP-98; ARG-99; LYS-541 AND LYS-549</scope>
</reference>
<feature type="chain" id="PRO_0000244627" description="Ribosome quality control complex subunit 2">
    <location>
        <begin position="1"/>
        <end position="1038"/>
    </location>
</feature>
<feature type="region of interest" description="Disordered" evidence="2">
    <location>
        <begin position="459"/>
        <end position="499"/>
    </location>
</feature>
<feature type="region of interest" description="Disordered" evidence="2">
    <location>
        <begin position="708"/>
        <end position="824"/>
    </location>
</feature>
<feature type="region of interest" description="Disordered" evidence="2">
    <location>
        <begin position="877"/>
        <end position="898"/>
    </location>
</feature>
<feature type="coiled-coil region" evidence="1">
    <location>
        <begin position="350"/>
        <end position="383"/>
    </location>
</feature>
<feature type="coiled-coil region" evidence="1">
    <location>
        <begin position="713"/>
        <end position="768"/>
    </location>
</feature>
<feature type="coiled-coil region" evidence="1">
    <location>
        <begin position="830"/>
        <end position="912"/>
    </location>
</feature>
<feature type="compositionally biased region" description="Acidic residues" evidence="2">
    <location>
        <begin position="714"/>
        <end position="761"/>
    </location>
</feature>
<feature type="compositionally biased region" description="Basic and acidic residues" evidence="2">
    <location>
        <begin position="780"/>
        <end position="794"/>
    </location>
</feature>
<feature type="compositionally biased region" description="Polar residues" evidence="2">
    <location>
        <begin position="795"/>
        <end position="805"/>
    </location>
</feature>
<feature type="compositionally biased region" description="Basic and acidic residues" evidence="2">
    <location>
        <begin position="877"/>
        <end position="894"/>
    </location>
</feature>
<feature type="modified residue" description="Phosphoserine" evidence="20">
    <location>
        <position position="797"/>
    </location>
</feature>
<feature type="mutagenesis site" description="Reduced ability to mediate CAT tailing without affecting binding to 60S ribosome subunits. Abolishes CAT tail synthesis and heat shock response, but still binds to 60S ribosomal subunits and supports LTN1-dependent ubiquitination of nascent chains; when associated with A-98 and A-99." evidence="9 15">
    <original>D</original>
    <variation>A</variation>
    <location>
        <position position="9"/>
    </location>
</feature>
<feature type="mutagenesis site" description="No effect on protein abundance. Decreased CAT tail synthesis. No effect on ribosome-associated ubiquitin-dependent protein catabolic process." evidence="14">
    <original>R</original>
    <variation>S</variation>
    <location>
        <position position="88"/>
    </location>
</feature>
<feature type="mutagenesis site" description="Reduced ability to mediate CAT tailing without affecting binding to 60S ribosome subunits. Abolishes CAT tail synthesis and heat shock response, but still binds to 60S ribosomal subunits and supports LTN1-dependent ubiquitination of nascent chains; when associated with A-9 and A-99." evidence="9 15">
    <original>D</original>
    <variation>A</variation>
    <location>
        <position position="98"/>
    </location>
</feature>
<feature type="mutagenesis site" description="No effect on protein abundance. Loss of CAT tail synthesis. Loss of ribosome-associated ubiquitin-dependent protein catabolic process." evidence="14">
    <original>D</original>
    <variation>Y</variation>
    <location>
        <position position="98"/>
    </location>
</feature>
<feature type="mutagenesis site" description="Reduced ability to mediate CAT tailing without affecting binding to 60S ribosome subunits. Abolishes CAT tail synthesis and heat shock response, but still binds to 60S ribosomal subunits and supports LTN1-dependent ubiquitination of nascent chains; when associated with A-9 and A-98." evidence="9 15">
    <original>R</original>
    <variation>A</variation>
    <location>
        <position position="99"/>
    </location>
</feature>
<feature type="mutagenesis site" description="No effect on protein abundance. Decreased CAT tail synthesis." evidence="14">
    <original>K</original>
    <variation>G</variation>
    <location>
        <position position="534"/>
    </location>
</feature>
<feature type="mutagenesis site" description="Reduced ability to mediate CAT tailing." evidence="15">
    <original>K</original>
    <variation>A</variation>
    <location>
        <position position="541"/>
    </location>
</feature>
<feature type="mutagenesis site" description="Reduced ability to mediate CAT tailing." evidence="15">
    <original>K</original>
    <variation>A</variation>
    <location>
        <position position="549"/>
    </location>
</feature>
<protein>
    <recommendedName>
        <fullName evidence="17">Ribosome quality control complex subunit 2</fullName>
    </recommendedName>
    <alternativeName>
        <fullName evidence="16">Translation-associated element 2</fullName>
    </alternativeName>
</protein>
<accession>Q12532</accession>
<accession>D6W403</accession>
<sequence>MKQRISALDLLLLARELKQDLEGYRLSNIYNIADSSKQFLLKFNKPDSKLNVVVDCGLRIYLTEFSRPIPPTPSGFVVKLRKHLKAKRLTALKQVDQDRILVLQFADGHFYLVLEFFSAGNVILLDENRRIMALQRVVLEHENKVGQIYEMFDESLFTTNNESADESIEKNRKAEYTSELVNEWIKAVQAKYESDITVIKQLNIQGKEGAKKKKVKVPSIHKLLLSKVPHLSSDLLSKNLKVFNIDPSESCLNLLEETDSLAELLNSTQLEYNQLLTTTDRKGYILAKRNENYISEKDTADLEFIYDTFHPFKPYINGGDTDSSCIIEVEGPYNRTLDKFFSTIESSKYALRIQNQESQAQKKIDDARAENDRKIQALLDVQELNERKGHLIIENAPLIEEVKLAVQGLIDQQMDWNTIEKLIKSEQKKGNRIAQLLNLPLNLKQNKISVKLDLSSKELNTSSDEDNESEGNTTDSSSDSDSEDMESSKERSTKSMKRKSNEKINVTIDLGLSAYANATEYFNIKKTSAQKQKKVEKNVGKAMKNIEVKIDQQLKKKLKDSHSVLKKIRTPYFFEKYSWFISSEGFLVMMGKSPAETDQIYSKYIEDDDIYMSNSFNSHVWIKNPEKTEVPPNTLMQAGILCMSSSEAWSKKISSSPWWCFAKNVSKFDGSDNSILPEGAFRLKNENDQNHLPPAQLVMGFGFLWKVKTSGNEDNGDDDEEEEEEEEEEEEEEEEEEEEEEEEKEEEEKEEEQQQDEDDSNEVNGLEKGGDSNDSTKNNSFEHDNLEKDIEKHCTISSDTDSDSGNAKAKNDNSSTQRILDEPGVPISLIENINSNVRGKRGKLKKIQKKYADQDETERLLRLEALGTLKGIEKQQQRKKEEIMKREVREDRKNKREKQRRLQALKFTKKEKARVNYDKHKSELKPSLDKGDVVDDIIPVFAPWPALLKYKYKVKIQPGSAKKTKTLTEILHYFKSRPLDGSSTDNEMDWPQEHEMIKGLKEQDLVLLLCVDKLKVTIAGQKSTKNGGNSSKKGKKKR</sequence>
<gene>
    <name evidence="17 19" type="primary">RQC2</name>
    <name evidence="16" type="synonym">TAE2</name>
    <name type="ordered locus">YPL009C</name>
    <name type="ORF">YP8132.04C</name>
</gene>
<proteinExistence type="evidence at protein level"/>
<comment type="function">
    <text evidence="5 6 7 8 9 10 11 12 13 14 15">Key component of the ribosome quality control complex (RQC), a ribosome-associated complex that mediates the extraction of incompletely synthesized nascent chains from stalled ribosomes as well as their ubiquitin-mediated proteasomal degradation (PubMed:20691087, PubMed:23178123, PubMed:23479637, PubMed:25349383, PubMed:25554787, PubMed:26934223, PubMed:28751611, PubMed:32934225). Thereby, frees 60S subunit ribosomes from the stalled translation complex and prevents the accumulation of nascent polypeptide chains that are potentially toxic for the cell (PubMed:23178123). Within the RQC complex, RQC2 specifically binds stalled 60S ribosomal subunits by recognizing an exposed, nascent chain-conjugated tRNA moiety and promotes the recruitment of RKR1/LTN1 to stalled 60S subunits (PubMed:23479637, PubMed:25349383). Following binding to stalled 60S ribosomal subunits, RQC2 mediates CAT tailing by recruiting alanine- and threonine-charged tRNA to the A-site and directing the elongation of stalled nascent chains independently of mRNA or 40S subunits, leading to non-templated C-terminal Ala and Thr extensions (CAT tails) (PubMed:25554787, PubMed:26934223, PubMed:27129255, PubMed:28751611, PubMed:32934225, PubMed:36804914). CAT tails promote the RKR1/LTN1-mediated ubiquitination of incompletely synthesized nascent polypeptides: CAT tailing facilitates RKR1/LTN1-dependent ubiquitination by exposing lysine residues that would otherwise remain buried in the ribosomal exit tunnel (PubMed:28751611, PubMed:32934225). Following ubiquitination, incompletely synthesized nascent polypeptides are recognized by CDC48 and degraded by the proteasome (PubMed:27129255). CAT-tailed proteins tend to aggregate and sequester chaperones and can induce proteotoxic stress; their RKR1/LTN1-dependent ubiquitination and degradation is required to prevent proteotoxic stress (PubMed:26934223, PubMed:27129255, PubMed:31133701).</text>
</comment>
<comment type="subunit">
    <text evidence="6 7 8 9">Component of the ribosome quality control complex (RQC), composed of the E3 ubiquitin ligase RKR1/LTN1, RQC1 and RQC2, as well as CDC48 and its ubiquitin-binding cofactors associated with the 60S ribosomal subunit (PubMed:23178123, PubMed:23479637, PubMed:25349383). RQC2 binds to the 40S-binding surface of tRNAs (PubMed:25554787).</text>
</comment>
<comment type="subcellular location">
    <subcellularLocation>
        <location evidence="3">Cytoplasm</location>
    </subcellularLocation>
</comment>
<comment type="miscellaneous">
    <text evidence="4">Present with 7700 molecules/cell in log phase SD medium.</text>
</comment>
<comment type="similarity">
    <text evidence="18">Belongs to the NEMF family.</text>
</comment>
<dbReference type="EMBL" id="U33335">
    <property type="protein sequence ID" value="AAB68096.1"/>
    <property type="molecule type" value="Genomic_DNA"/>
</dbReference>
<dbReference type="EMBL" id="Z48483">
    <property type="protein sequence ID" value="CAA88377.1"/>
    <property type="molecule type" value="Genomic_DNA"/>
</dbReference>
<dbReference type="EMBL" id="Z71255">
    <property type="protein sequence ID" value="CAA95032.1"/>
    <property type="molecule type" value="Genomic_DNA"/>
</dbReference>
<dbReference type="EMBL" id="BK006949">
    <property type="protein sequence ID" value="DAA11419.1"/>
    <property type="molecule type" value="Genomic_DNA"/>
</dbReference>
<dbReference type="PIR" id="S52522">
    <property type="entry name" value="S52522"/>
</dbReference>
<dbReference type="RefSeq" id="NP_015316.1">
    <property type="nucleotide sequence ID" value="NM_001183823.1"/>
</dbReference>
<dbReference type="PDB" id="8AAF">
    <property type="method" value="EM"/>
    <property type="resolution" value="2.50 A"/>
    <property type="chains" value="a=1-1038"/>
</dbReference>
<dbReference type="PDB" id="8AGT">
    <property type="method" value="EM"/>
    <property type="resolution" value="2.60 A"/>
    <property type="chains" value="a=1-1038"/>
</dbReference>
<dbReference type="PDB" id="8AGU">
    <property type="method" value="EM"/>
    <property type="resolution" value="2.70 A"/>
    <property type="chains" value="a=1-1038"/>
</dbReference>
<dbReference type="PDB" id="8AGV">
    <property type="method" value="EM"/>
    <property type="resolution" value="2.60 A"/>
    <property type="chains" value="a=1-1038"/>
</dbReference>
<dbReference type="PDB" id="8AGW">
    <property type="method" value="EM"/>
    <property type="resolution" value="2.60 A"/>
    <property type="chains" value="a=1-1038"/>
</dbReference>
<dbReference type="PDB" id="8AGX">
    <property type="method" value="EM"/>
    <property type="resolution" value="2.40 A"/>
    <property type="chains" value="a=1-1038"/>
</dbReference>
<dbReference type="PDB" id="8AGZ">
    <property type="method" value="EM"/>
    <property type="resolution" value="2.60 A"/>
    <property type="chains" value="a=1-1038"/>
</dbReference>
<dbReference type="PDBsum" id="8AAF"/>
<dbReference type="PDBsum" id="8AGT"/>
<dbReference type="PDBsum" id="8AGU"/>
<dbReference type="PDBsum" id="8AGV"/>
<dbReference type="PDBsum" id="8AGW"/>
<dbReference type="PDBsum" id="8AGX"/>
<dbReference type="PDBsum" id="8AGZ"/>
<dbReference type="EMDB" id="EMD-15296"/>
<dbReference type="EMDB" id="EMD-15423"/>
<dbReference type="EMDB" id="EMD-15427"/>
<dbReference type="SMR" id="Q12532"/>
<dbReference type="BioGRID" id="36168">
    <property type="interactions" value="244"/>
</dbReference>
<dbReference type="ComplexPortal" id="CPX-3265">
    <property type="entry name" value="Ribosome quality control complex"/>
</dbReference>
<dbReference type="DIP" id="DIP-6570N"/>
<dbReference type="FunCoup" id="Q12532">
    <property type="interactions" value="1172"/>
</dbReference>
<dbReference type="IntAct" id="Q12532">
    <property type="interactions" value="67"/>
</dbReference>
<dbReference type="MINT" id="Q12532"/>
<dbReference type="STRING" id="4932.YPL009C"/>
<dbReference type="GlyGen" id="Q12532">
    <property type="glycosylation" value="1 site"/>
</dbReference>
<dbReference type="iPTMnet" id="Q12532"/>
<dbReference type="PaxDb" id="4932-YPL009C"/>
<dbReference type="PeptideAtlas" id="Q12532"/>
<dbReference type="EnsemblFungi" id="YPL009C_mRNA">
    <property type="protein sequence ID" value="YPL009C"/>
    <property type="gene ID" value="YPL009C"/>
</dbReference>
<dbReference type="GeneID" id="856098"/>
<dbReference type="KEGG" id="sce:YPL009C"/>
<dbReference type="AGR" id="SGD:S000005930"/>
<dbReference type="SGD" id="S000005930">
    <property type="gene designation" value="RQC2"/>
</dbReference>
<dbReference type="VEuPathDB" id="FungiDB:YPL009C"/>
<dbReference type="eggNOG" id="KOG2030">
    <property type="taxonomic scope" value="Eukaryota"/>
</dbReference>
<dbReference type="GeneTree" id="ENSGT00390000018516"/>
<dbReference type="HOGENOM" id="CLU_003612_1_1_1"/>
<dbReference type="InParanoid" id="Q12532"/>
<dbReference type="OMA" id="MFLEFFA"/>
<dbReference type="OrthoDB" id="207084at2759"/>
<dbReference type="BioCyc" id="YEAST:G3O-33928-MONOMER"/>
<dbReference type="BioGRID-ORCS" id="856098">
    <property type="hits" value="0 hits in 10 CRISPR screens"/>
</dbReference>
<dbReference type="CD-CODE" id="E03F929F">
    <property type="entry name" value="Stress granule"/>
</dbReference>
<dbReference type="PRO" id="PR:Q12532"/>
<dbReference type="Proteomes" id="UP000002311">
    <property type="component" value="Chromosome XVI"/>
</dbReference>
<dbReference type="RNAct" id="Q12532">
    <property type="molecule type" value="protein"/>
</dbReference>
<dbReference type="GO" id="GO:0005737">
    <property type="term" value="C:cytoplasm"/>
    <property type="evidence" value="ECO:0007005"/>
    <property type="project" value="SGD"/>
</dbReference>
<dbReference type="GO" id="GO:0010494">
    <property type="term" value="C:cytoplasmic stress granule"/>
    <property type="evidence" value="ECO:0000314"/>
    <property type="project" value="SGD"/>
</dbReference>
<dbReference type="GO" id="GO:0022626">
    <property type="term" value="C:cytosolic ribosome"/>
    <property type="evidence" value="ECO:0000314"/>
    <property type="project" value="UniProt"/>
</dbReference>
<dbReference type="GO" id="GO:1990112">
    <property type="term" value="C:RQC complex"/>
    <property type="evidence" value="ECO:0000314"/>
    <property type="project" value="UniProtKB"/>
</dbReference>
<dbReference type="GO" id="GO:1904678">
    <property type="term" value="F:alpha-aminoacyl-tRNA binding"/>
    <property type="evidence" value="ECO:0000314"/>
    <property type="project" value="UniProtKB"/>
</dbReference>
<dbReference type="GO" id="GO:0003729">
    <property type="term" value="F:mRNA binding"/>
    <property type="evidence" value="ECO:0007005"/>
    <property type="project" value="SGD"/>
</dbReference>
<dbReference type="GO" id="GO:0043023">
    <property type="term" value="F:ribosomal large subunit binding"/>
    <property type="evidence" value="ECO:0000314"/>
    <property type="project" value="SGD"/>
</dbReference>
<dbReference type="GO" id="GO:0000049">
    <property type="term" value="F:tRNA binding"/>
    <property type="evidence" value="ECO:0000314"/>
    <property type="project" value="SGD"/>
</dbReference>
<dbReference type="GO" id="GO:0140708">
    <property type="term" value="P:CAT tailing"/>
    <property type="evidence" value="ECO:0000314"/>
    <property type="project" value="UniProtKB"/>
</dbReference>
<dbReference type="GO" id="GO:0043043">
    <property type="term" value="P:peptide biosynthetic process"/>
    <property type="evidence" value="ECO:0000315"/>
    <property type="project" value="SGD"/>
</dbReference>
<dbReference type="GO" id="GO:0072344">
    <property type="term" value="P:rescue of stalled ribosome"/>
    <property type="evidence" value="ECO:0000314"/>
    <property type="project" value="UniProtKB"/>
</dbReference>
<dbReference type="GO" id="GO:1990116">
    <property type="term" value="P:ribosome-associated ubiquitin-dependent protein catabolic process"/>
    <property type="evidence" value="ECO:0000314"/>
    <property type="project" value="UniProtKB"/>
</dbReference>
<dbReference type="FunFam" id="2.30.310.10:FF:000003">
    <property type="entry name" value="Zinc knuckle domain containing protein"/>
    <property type="match status" value="1"/>
</dbReference>
<dbReference type="Gene3D" id="2.30.310.10">
    <property type="entry name" value="ibrinogen binding protein from staphylococcus aureus domain"/>
    <property type="match status" value="1"/>
</dbReference>
<dbReference type="InterPro" id="IPR021846">
    <property type="entry name" value="NFACT-C"/>
</dbReference>
<dbReference type="InterPro" id="IPR008532">
    <property type="entry name" value="NFACT_RNA-bd"/>
</dbReference>
<dbReference type="InterPro" id="IPR051608">
    <property type="entry name" value="RQC_Subunit_NEMF"/>
</dbReference>
<dbReference type="PANTHER" id="PTHR15239">
    <property type="entry name" value="NUCLEAR EXPORT MEDIATOR FACTOR NEMF"/>
    <property type="match status" value="1"/>
</dbReference>
<dbReference type="PANTHER" id="PTHR15239:SF6">
    <property type="entry name" value="RIBOSOME QUALITY CONTROL COMPLEX SUBUNIT NEMF"/>
    <property type="match status" value="1"/>
</dbReference>
<dbReference type="Pfam" id="PF11923">
    <property type="entry name" value="NFACT-C"/>
    <property type="match status" value="1"/>
</dbReference>
<dbReference type="Pfam" id="PF05670">
    <property type="entry name" value="NFACT-R_1"/>
    <property type="match status" value="1"/>
</dbReference>
<dbReference type="Pfam" id="PF05833">
    <property type="entry name" value="NFACT_N"/>
    <property type="match status" value="1"/>
</dbReference>